<keyword id="KW-1003">Cell membrane</keyword>
<keyword id="KW-0325">Glycoprotein</keyword>
<keyword id="KW-0378">Hydrolase</keyword>
<keyword id="KW-0442">Lipid degradation</keyword>
<keyword id="KW-0443">Lipid metabolism</keyword>
<keyword id="KW-0472">Membrane</keyword>
<keyword id="KW-1185">Reference proteome</keyword>
<keyword id="KW-0719">Serine esterase</keyword>
<keyword id="KW-0735">Signal-anchor</keyword>
<keyword id="KW-0812">Transmembrane</keyword>
<keyword id="KW-1133">Transmembrane helix</keyword>
<evidence type="ECO:0000250" key="1">
    <source>
        <dbReference type="UniProtKB" id="P08910"/>
    </source>
</evidence>
<evidence type="ECO:0000250" key="2">
    <source>
        <dbReference type="UniProtKB" id="Q86WA6"/>
    </source>
</evidence>
<evidence type="ECO:0000250" key="3">
    <source>
        <dbReference type="UniProtKB" id="Q9QXM0"/>
    </source>
</evidence>
<evidence type="ECO:0000255" key="4"/>
<evidence type="ECO:0000255" key="5">
    <source>
        <dbReference type="PROSITE-ProRule" id="PRU00498"/>
    </source>
</evidence>
<evidence type="ECO:0000305" key="6"/>
<feature type="chain" id="PRO_0000280784" description="Monoacylglycerol lipase ABHD2">
    <location>
        <begin position="1"/>
        <end position="422"/>
    </location>
</feature>
<feature type="topological domain" description="Cytoplasmic" evidence="6">
    <location>
        <begin position="1"/>
        <end position="15"/>
    </location>
</feature>
<feature type="transmembrane region" description="Helical; Signal-anchor for type II membrane protein" evidence="4">
    <location>
        <begin position="16"/>
        <end position="36"/>
    </location>
</feature>
<feature type="topological domain" description="Extracellular" evidence="6">
    <location>
        <begin position="37"/>
        <end position="422"/>
    </location>
</feature>
<feature type="domain" description="AB hydrolase-1" evidence="4">
    <location>
        <begin position="134"/>
        <end position="385"/>
    </location>
</feature>
<feature type="active site" description="Nucleophile" evidence="2">
    <location>
        <position position="213"/>
    </location>
</feature>
<feature type="active site" description="Charge relay system" evidence="2">
    <location>
        <position position="348"/>
    </location>
</feature>
<feature type="active site" description="Charge relay system" evidence="2">
    <location>
        <position position="379"/>
    </location>
</feature>
<feature type="glycosylation site" description="N-linked (GlcNAc...) asparagine" evidence="5">
    <location>
        <position position="142"/>
    </location>
</feature>
<feature type="glycosylation site" description="N-linked (GlcNAc...) asparagine" evidence="5">
    <location>
        <position position="285"/>
    </location>
</feature>
<feature type="glycosylation site" description="N-linked (GlcNAc...) asparagine" evidence="5">
    <location>
        <position position="335"/>
    </location>
</feature>
<feature type="glycosylation site" description="N-linked (GlcNAc...) asparagine" evidence="5">
    <location>
        <position position="344"/>
    </location>
</feature>
<protein>
    <recommendedName>
        <fullName evidence="1">Monoacylglycerol lipase ABHD2</fullName>
        <ecNumber evidence="1">3.1.1.23</ecNumber>
    </recommendedName>
    <alternativeName>
        <fullName evidence="6">2-arachidonoylglycerol hydrolase</fullName>
    </alternativeName>
    <alternativeName>
        <fullName evidence="6">Abhydrolase domain-containing protein 2-B</fullName>
    </alternativeName>
    <alternativeName>
        <fullName>Acetylesterase</fullName>
        <ecNumber>3.1.1.6</ecNumber>
    </alternativeName>
    <alternativeName>
        <fullName>Triacylglycerol lipase</fullName>
        <ecNumber>3.1.1.79</ecNumber>
    </alternativeName>
</protein>
<gene>
    <name type="primary">abhd2b</name>
    <name type="ORF">zgc:153750</name>
</gene>
<dbReference type="EC" id="3.1.1.23" evidence="1"/>
<dbReference type="EC" id="3.1.1.6"/>
<dbReference type="EC" id="3.1.1.79"/>
<dbReference type="EMBL" id="BC124444">
    <property type="protein sequence ID" value="AAI24445.1"/>
    <property type="molecule type" value="mRNA"/>
</dbReference>
<dbReference type="RefSeq" id="NP_001073145.1">
    <property type="nucleotide sequence ID" value="NM_001079677.1"/>
</dbReference>
<dbReference type="FunCoup" id="Q05AK6">
    <property type="interactions" value="214"/>
</dbReference>
<dbReference type="STRING" id="7955.ENSDARP00000067326"/>
<dbReference type="ESTHER" id="danre-abh2b">
    <property type="family name" value="abh_upf0017"/>
</dbReference>
<dbReference type="GlyCosmos" id="Q05AK6">
    <property type="glycosylation" value="4 sites, No reported glycans"/>
</dbReference>
<dbReference type="PaxDb" id="7955-ENSDARP00000067326"/>
<dbReference type="GeneID" id="559290"/>
<dbReference type="KEGG" id="dre:559290"/>
<dbReference type="AGR" id="ZFIN:ZDB-GENE-061027-74"/>
<dbReference type="CTD" id="559290"/>
<dbReference type="ZFIN" id="ZDB-GENE-061027-74">
    <property type="gene designation" value="abhd2b"/>
</dbReference>
<dbReference type="eggNOG" id="KOG1838">
    <property type="taxonomic scope" value="Eukaryota"/>
</dbReference>
<dbReference type="InParanoid" id="Q05AK6"/>
<dbReference type="OrthoDB" id="5954035at2759"/>
<dbReference type="PhylomeDB" id="Q05AK6"/>
<dbReference type="PRO" id="PR:Q05AK6"/>
<dbReference type="Proteomes" id="UP000000437">
    <property type="component" value="Alternate scaffold 25"/>
</dbReference>
<dbReference type="Proteomes" id="UP000000437">
    <property type="component" value="Chromosome 25"/>
</dbReference>
<dbReference type="GO" id="GO:0036126">
    <property type="term" value="C:sperm flagellum"/>
    <property type="evidence" value="ECO:0000318"/>
    <property type="project" value="GO_Central"/>
</dbReference>
<dbReference type="GO" id="GO:0097524">
    <property type="term" value="C:sperm plasma membrane"/>
    <property type="evidence" value="ECO:0000318"/>
    <property type="project" value="GO_Central"/>
</dbReference>
<dbReference type="GO" id="GO:0008126">
    <property type="term" value="F:acetylesterase activity"/>
    <property type="evidence" value="ECO:0000250"/>
    <property type="project" value="UniProtKB"/>
</dbReference>
<dbReference type="GO" id="GO:0120516">
    <property type="term" value="F:diacylglycerol lipase activity"/>
    <property type="evidence" value="ECO:0000250"/>
    <property type="project" value="UniProtKB"/>
</dbReference>
<dbReference type="GO" id="GO:0042562">
    <property type="term" value="F:hormone binding"/>
    <property type="evidence" value="ECO:0000250"/>
    <property type="project" value="UniProtKB"/>
</dbReference>
<dbReference type="GO" id="GO:0047372">
    <property type="term" value="F:monoacylglycerol lipase activity"/>
    <property type="evidence" value="ECO:0000250"/>
    <property type="project" value="UniProtKB"/>
</dbReference>
<dbReference type="GO" id="GO:0003707">
    <property type="term" value="F:nuclear steroid receptor activity"/>
    <property type="evidence" value="ECO:0000250"/>
    <property type="project" value="UniProtKB"/>
</dbReference>
<dbReference type="GO" id="GO:0004806">
    <property type="term" value="F:triacylglycerol lipase activity"/>
    <property type="evidence" value="ECO:0007669"/>
    <property type="project" value="RHEA"/>
</dbReference>
<dbReference type="GO" id="GO:0046464">
    <property type="term" value="P:acylglycerol catabolic process"/>
    <property type="evidence" value="ECO:0000250"/>
    <property type="project" value="UniProtKB"/>
</dbReference>
<dbReference type="GO" id="GO:0051792">
    <property type="term" value="P:medium-chain fatty acid biosynthetic process"/>
    <property type="evidence" value="ECO:0000318"/>
    <property type="project" value="GO_Central"/>
</dbReference>
<dbReference type="GO" id="GO:0051793">
    <property type="term" value="P:medium-chain fatty acid catabolic process"/>
    <property type="evidence" value="ECO:0000318"/>
    <property type="project" value="GO_Central"/>
</dbReference>
<dbReference type="GO" id="GO:0032570">
    <property type="term" value="P:response to progesterone"/>
    <property type="evidence" value="ECO:0000250"/>
    <property type="project" value="UniProtKB"/>
</dbReference>
<dbReference type="GO" id="GO:0048240">
    <property type="term" value="P:sperm capacitation"/>
    <property type="evidence" value="ECO:0000318"/>
    <property type="project" value="GO_Central"/>
</dbReference>
<dbReference type="GO" id="GO:0043401">
    <property type="term" value="P:steroid hormone receptor signaling pathway"/>
    <property type="evidence" value="ECO:0000250"/>
    <property type="project" value="UniProtKB"/>
</dbReference>
<dbReference type="FunFam" id="3.40.50.1820:FF:000053">
    <property type="entry name" value="Abhydrolase domain containing 2"/>
    <property type="match status" value="1"/>
</dbReference>
<dbReference type="Gene3D" id="3.40.50.1820">
    <property type="entry name" value="alpha/beta hydrolase"/>
    <property type="match status" value="1"/>
</dbReference>
<dbReference type="InterPro" id="IPR000073">
    <property type="entry name" value="AB_hydrolase_1"/>
</dbReference>
<dbReference type="InterPro" id="IPR050960">
    <property type="entry name" value="AB_hydrolase_4_sf"/>
</dbReference>
<dbReference type="InterPro" id="IPR029058">
    <property type="entry name" value="AB_hydrolase_fold"/>
</dbReference>
<dbReference type="InterPro" id="IPR012020">
    <property type="entry name" value="ABHD4"/>
</dbReference>
<dbReference type="PANTHER" id="PTHR10794">
    <property type="entry name" value="ABHYDROLASE DOMAIN-CONTAINING PROTEIN"/>
    <property type="match status" value="1"/>
</dbReference>
<dbReference type="PANTHER" id="PTHR10794:SF79">
    <property type="entry name" value="MONOACYLGLYCEROL LIPASE ABHD2"/>
    <property type="match status" value="1"/>
</dbReference>
<dbReference type="Pfam" id="PF00561">
    <property type="entry name" value="Abhydrolase_1"/>
    <property type="match status" value="1"/>
</dbReference>
<dbReference type="PIRSF" id="PIRSF005211">
    <property type="entry name" value="Ab_hydro_YheT"/>
    <property type="match status" value="1"/>
</dbReference>
<dbReference type="SUPFAM" id="SSF53474">
    <property type="entry name" value="alpha/beta-Hydrolases"/>
    <property type="match status" value="1"/>
</dbReference>
<sequence>MSAQLEADVRTMSPEMPAMFDGMKLAAVAAVLYVIVRSLNLKCPTAAADITCQDTLLNHYLLKSCPVLTKEYIPPLLWGKSGHLQTALYGKIGRVKSPKPCGLRKFLPMQDGATATFDLFEPQGVHSTGDDITMVICPGIGNHSEKHYIRTFVDYSQKQGYRCAVLNHLGALPNIELTSPRMFTYGCTWEFSAMVGFIKRTFPQTQLIVVGFSLGGNIACKYLGENPANQERVLCCVSVCQGYSALRAQETFLQWDQCRRLYNFLMADNMKKIILSHRGSLFGMNSSRMEFADLSRLYTATSLMQIDDNIMRKFHGHNSLKEYYEKESCVHYIHNISVPLLLVNSSDDPLVHQSLLTIPRTLAEKKQNVIFALTLHGGHLGFFEGAVLFPQPLSWMDKVIVSYANAVCQWEKHKPQCHQQKE</sequence>
<organism>
    <name type="scientific">Danio rerio</name>
    <name type="common">Zebrafish</name>
    <name type="synonym">Brachydanio rerio</name>
    <dbReference type="NCBI Taxonomy" id="7955"/>
    <lineage>
        <taxon>Eukaryota</taxon>
        <taxon>Metazoa</taxon>
        <taxon>Chordata</taxon>
        <taxon>Craniata</taxon>
        <taxon>Vertebrata</taxon>
        <taxon>Euteleostomi</taxon>
        <taxon>Actinopterygii</taxon>
        <taxon>Neopterygii</taxon>
        <taxon>Teleostei</taxon>
        <taxon>Ostariophysi</taxon>
        <taxon>Cypriniformes</taxon>
        <taxon>Danionidae</taxon>
        <taxon>Danioninae</taxon>
        <taxon>Danio</taxon>
    </lineage>
</organism>
<comment type="function">
    <text evidence="1 3">Progesterone-dependent acylglycerol lipase that catalyzes hydrolysis of endocannabinoid arachidonoylglycerol (AG) from cell membrane. Acts as a progesterone receptor: progesterone-binding activates the acylglycerol lipase activity, mediating degradation of 1-arachidonoylglycerol (1AG) and 2-arachidonoylglycerol (2AG) to glycerol and arachidonic acid (AA). Also displays an ester hydrolase activity against acetyl ester, butanoate ester and hexadecanoate ester. Plays a key role in sperm capacitation in response to progesterone by mediating degradation of 2AG, an inhibitor of the sperm calcium channel CatSper, leading to calcium influx via CatSper and sperm activation (By similarity). May also play a role in smooth muscle cells migration (By similarity).</text>
</comment>
<comment type="catalytic activity">
    <reaction evidence="1">
        <text>Hydrolyzes glycerol monoesters of long-chain fatty acids.</text>
        <dbReference type="EC" id="3.1.1.23"/>
    </reaction>
</comment>
<comment type="catalytic activity">
    <reaction evidence="1">
        <text>an acetyl ester + H2O = an aliphatic alcohol + acetate + H(+)</text>
        <dbReference type="Rhea" id="RHEA:12957"/>
        <dbReference type="ChEBI" id="CHEBI:2571"/>
        <dbReference type="ChEBI" id="CHEBI:15377"/>
        <dbReference type="ChEBI" id="CHEBI:15378"/>
        <dbReference type="ChEBI" id="CHEBI:30089"/>
        <dbReference type="ChEBI" id="CHEBI:47622"/>
        <dbReference type="EC" id="3.1.1.6"/>
    </reaction>
    <physiologicalReaction direction="left-to-right" evidence="1">
        <dbReference type="Rhea" id="RHEA:12958"/>
    </physiologicalReaction>
</comment>
<comment type="catalytic activity">
    <reaction evidence="1">
        <text>a triacylglycerol + H2O = a diacylglycerol + a fatty acid + H(+)</text>
        <dbReference type="Rhea" id="RHEA:12044"/>
        <dbReference type="ChEBI" id="CHEBI:15377"/>
        <dbReference type="ChEBI" id="CHEBI:15378"/>
        <dbReference type="ChEBI" id="CHEBI:17855"/>
        <dbReference type="ChEBI" id="CHEBI:18035"/>
        <dbReference type="ChEBI" id="CHEBI:28868"/>
        <dbReference type="EC" id="3.1.1.79"/>
    </reaction>
    <physiologicalReaction direction="left-to-right" evidence="1">
        <dbReference type="Rhea" id="RHEA:12045"/>
    </physiologicalReaction>
</comment>
<comment type="catalytic activity">
    <reaction evidence="1">
        <text>2-(5Z,8Z,11Z,14Z-eicosatetraenoyl)-glycerol + H2O = glycerol + (5Z,8Z,11Z,14Z)-eicosatetraenoate + H(+)</text>
        <dbReference type="Rhea" id="RHEA:26132"/>
        <dbReference type="ChEBI" id="CHEBI:15377"/>
        <dbReference type="ChEBI" id="CHEBI:15378"/>
        <dbReference type="ChEBI" id="CHEBI:17754"/>
        <dbReference type="ChEBI" id="CHEBI:32395"/>
        <dbReference type="ChEBI" id="CHEBI:52392"/>
    </reaction>
    <physiologicalReaction direction="left-to-right" evidence="1">
        <dbReference type="Rhea" id="RHEA:26133"/>
    </physiologicalReaction>
</comment>
<comment type="catalytic activity">
    <reaction evidence="1">
        <text>a butanoate ester + H2O = an aliphatic alcohol + butanoate + H(+)</text>
        <dbReference type="Rhea" id="RHEA:47348"/>
        <dbReference type="ChEBI" id="CHEBI:2571"/>
        <dbReference type="ChEBI" id="CHEBI:15377"/>
        <dbReference type="ChEBI" id="CHEBI:15378"/>
        <dbReference type="ChEBI" id="CHEBI:17968"/>
        <dbReference type="ChEBI" id="CHEBI:50477"/>
    </reaction>
    <physiologicalReaction direction="left-to-right" evidence="1">
        <dbReference type="Rhea" id="RHEA:47349"/>
    </physiologicalReaction>
</comment>
<comment type="catalytic activity">
    <reaction evidence="1">
        <text>hexadecanoate ester + H2O = an aliphatic alcohol + hexadecanoate + H(+)</text>
        <dbReference type="Rhea" id="RHEA:47392"/>
        <dbReference type="ChEBI" id="CHEBI:2571"/>
        <dbReference type="ChEBI" id="CHEBI:7896"/>
        <dbReference type="ChEBI" id="CHEBI:15377"/>
        <dbReference type="ChEBI" id="CHEBI:15378"/>
        <dbReference type="ChEBI" id="CHEBI:25835"/>
    </reaction>
    <physiologicalReaction direction="left-to-right" evidence="1">
        <dbReference type="Rhea" id="RHEA:47393"/>
    </physiologicalReaction>
</comment>
<comment type="activity regulation">
    <text evidence="1">Acylglycerol lipase activity is activated upon binding to progesterone.</text>
</comment>
<comment type="subcellular location">
    <subcellularLocation>
        <location evidence="1">Cell membrane</location>
        <topology evidence="1">Single-pass type II membrane protein</topology>
    </subcellularLocation>
</comment>
<comment type="similarity">
    <text evidence="6">Belongs to the AB hydrolase superfamily. AB hydrolase 4 family.</text>
</comment>
<proteinExistence type="evidence at transcript level"/>
<reference key="1">
    <citation type="submission" date="2006-09" db="EMBL/GenBank/DDBJ databases">
        <authorList>
            <consortium name="NIH - Zebrafish Gene Collection (ZGC) project"/>
        </authorList>
    </citation>
    <scope>NUCLEOTIDE SEQUENCE [LARGE SCALE MRNA]</scope>
    <source>
        <tissue>Olfactory epithelium</tissue>
    </source>
</reference>
<name>ABH2B_DANRE</name>
<accession>Q05AK6</accession>